<reference key="1">
    <citation type="submission" date="1993-02" db="EMBL/GenBank/DDBJ databases">
        <title>A thioredoxin gene is located upstream of rbcLS in the unicellular red alga Cyanidium caldarium, strain RK-1.</title>
        <authorList>
            <person name="Langsdorf A."/>
            <person name="Emich A."/>
            <person name="Zetsche K."/>
        </authorList>
    </citation>
    <scope>NUCLEOTIDE SEQUENCE [GENOMIC DNA]</scope>
    <source>
        <strain>RK-1</strain>
    </source>
</reference>
<reference key="2">
    <citation type="journal article" date="2000" name="J. Mol. Evol.">
        <title>The structure and gene repertoire of an ancient red algal plastid genome.</title>
        <authorList>
            <person name="Gloeckner G."/>
            <person name="Rosenthal A."/>
            <person name="Valentin K.-U."/>
        </authorList>
    </citation>
    <scope>NUCLEOTIDE SEQUENCE [LARGE SCALE GENOMIC DNA]</scope>
    <source>
        <strain>RK-1</strain>
    </source>
</reference>
<feature type="chain" id="PRO_0000062431" description="Ribulose bisphosphate carboxylase large chain">
    <location>
        <begin position="1"/>
        <end position="488"/>
    </location>
</feature>
<feature type="active site" description="Proton acceptor" evidence="1">
    <location>
        <position position="179"/>
    </location>
</feature>
<feature type="active site" description="Proton acceptor" evidence="1">
    <location>
        <position position="297"/>
    </location>
</feature>
<feature type="binding site" description="in homodimeric partner" evidence="1">
    <location>
        <position position="127"/>
    </location>
    <ligand>
        <name>substrate</name>
    </ligand>
</feature>
<feature type="binding site" evidence="1">
    <location>
        <position position="177"/>
    </location>
    <ligand>
        <name>substrate</name>
    </ligand>
</feature>
<feature type="binding site" evidence="1">
    <location>
        <position position="181"/>
    </location>
    <ligand>
        <name>substrate</name>
    </ligand>
</feature>
<feature type="binding site" description="via carbamate group" evidence="1">
    <location>
        <position position="205"/>
    </location>
    <ligand>
        <name>Mg(2+)</name>
        <dbReference type="ChEBI" id="CHEBI:18420"/>
    </ligand>
</feature>
<feature type="binding site" evidence="1">
    <location>
        <position position="207"/>
    </location>
    <ligand>
        <name>Mg(2+)</name>
        <dbReference type="ChEBI" id="CHEBI:18420"/>
    </ligand>
</feature>
<feature type="binding site" evidence="1">
    <location>
        <position position="208"/>
    </location>
    <ligand>
        <name>Mg(2+)</name>
        <dbReference type="ChEBI" id="CHEBI:18420"/>
    </ligand>
</feature>
<feature type="binding site" evidence="1">
    <location>
        <position position="298"/>
    </location>
    <ligand>
        <name>substrate</name>
    </ligand>
</feature>
<feature type="binding site" evidence="1">
    <location>
        <position position="330"/>
    </location>
    <ligand>
        <name>substrate</name>
    </ligand>
</feature>
<feature type="binding site" evidence="1">
    <location>
        <position position="382"/>
    </location>
    <ligand>
        <name>substrate</name>
    </ligand>
</feature>
<feature type="site" description="Transition state stabilizer" evidence="1">
    <location>
        <position position="337"/>
    </location>
</feature>
<feature type="modified residue" description="N6-carboxylysine" evidence="1">
    <location>
        <position position="205"/>
    </location>
</feature>
<feature type="sequence conflict" description="In Ref. 1; CAA79821." evidence="2" ref="1">
    <original>A</original>
    <variation>R</variation>
    <location>
        <position position="62"/>
    </location>
</feature>
<feature type="sequence conflict" description="In Ref. 1; CAA79821." evidence="2" ref="1">
    <original>A</original>
    <variation>R</variation>
    <location>
        <position position="422"/>
    </location>
</feature>
<protein>
    <recommendedName>
        <fullName evidence="1">Ribulose bisphosphate carboxylase large chain</fullName>
        <shortName evidence="1">RuBisCO large subunit</shortName>
        <ecNumber evidence="1">4.1.1.39</ecNumber>
    </recommendedName>
</protein>
<keyword id="KW-0113">Calvin cycle</keyword>
<keyword id="KW-0120">Carbon dioxide fixation</keyword>
<keyword id="KW-0150">Chloroplast</keyword>
<keyword id="KW-0456">Lyase</keyword>
<keyword id="KW-0460">Magnesium</keyword>
<keyword id="KW-0479">Metal-binding</keyword>
<keyword id="KW-0503">Monooxygenase</keyword>
<keyword id="KW-0560">Oxidoreductase</keyword>
<keyword id="KW-0601">Photorespiration</keyword>
<keyword id="KW-0602">Photosynthesis</keyword>
<keyword id="KW-0934">Plastid</keyword>
<geneLocation type="chloroplast"/>
<comment type="function">
    <text evidence="1">RuBisCO catalyzes two reactions: the carboxylation of D-ribulose 1,5-bisphosphate, the primary event in carbon dioxide fixation, as well as the oxidative fragmentation of the pentose substrate in the photorespiration process. Both reactions occur simultaneously and in competition at the same active site.</text>
</comment>
<comment type="catalytic activity">
    <reaction evidence="1">
        <text>2 (2R)-3-phosphoglycerate + 2 H(+) = D-ribulose 1,5-bisphosphate + CO2 + H2O</text>
        <dbReference type="Rhea" id="RHEA:23124"/>
        <dbReference type="ChEBI" id="CHEBI:15377"/>
        <dbReference type="ChEBI" id="CHEBI:15378"/>
        <dbReference type="ChEBI" id="CHEBI:16526"/>
        <dbReference type="ChEBI" id="CHEBI:57870"/>
        <dbReference type="ChEBI" id="CHEBI:58272"/>
        <dbReference type="EC" id="4.1.1.39"/>
    </reaction>
</comment>
<comment type="catalytic activity">
    <reaction evidence="1">
        <text>D-ribulose 1,5-bisphosphate + O2 = 2-phosphoglycolate + (2R)-3-phosphoglycerate + 2 H(+)</text>
        <dbReference type="Rhea" id="RHEA:36631"/>
        <dbReference type="ChEBI" id="CHEBI:15378"/>
        <dbReference type="ChEBI" id="CHEBI:15379"/>
        <dbReference type="ChEBI" id="CHEBI:57870"/>
        <dbReference type="ChEBI" id="CHEBI:58033"/>
        <dbReference type="ChEBI" id="CHEBI:58272"/>
    </reaction>
</comment>
<comment type="cofactor">
    <cofactor evidence="1">
        <name>Mg(2+)</name>
        <dbReference type="ChEBI" id="CHEBI:18420"/>
    </cofactor>
    <text evidence="1">Binds 1 Mg(2+) ion per subunit.</text>
</comment>
<comment type="subunit">
    <text evidence="1">Heterohexadecamer of 8 large chains and 8 small chains.</text>
</comment>
<comment type="subcellular location">
    <subcellularLocation>
        <location>Plastid</location>
        <location>Chloroplast</location>
    </subcellularLocation>
</comment>
<comment type="miscellaneous">
    <text evidence="1">The basic functional RuBisCO is composed of a large chain homodimer in a 'head-to-tail' conformation. In form I RuBisCO this homodimer is arranged in a barrel-like tetramer with the small subunits forming a tetrameric 'cap' on each end of the 'barrel'.</text>
</comment>
<comment type="similarity">
    <text evidence="1">Belongs to the RuBisCO large chain family. Type I subfamily.</text>
</comment>
<sequence>MAQSVQERTRLKNKRYESGVIPYAKMGYWDPNYVVKDTDILALFRVTPQPGVDPIEASAAVAGESSTATWTVIWCDLLTACDVYRAKAYRVDQVPNSPDQYFAYIAYDLDLFEEGSIANLTASIIGNVFGFKALAALRLEDMRIPIGYLKTFQGPATGVVVERERLNMFGKPFLGATVKPKLGLSSKNYGRVVYEGLKGGLNFLKDDENINSQPFMRWRERFLYVMEGVNRASAATGEIKGSYLNVTAATMEEMYNRAACAKEVGSIIIMIDLVIGYTAIQSMAIWARENNMILHLHRAGNSTYARQKNHGINFRVICKWMRMAGVDHIHAGTVVGKLEGDPIIVKGFYNTLLLPKLDVNLPQGLFFEMDWASLRKTVPVASGGIHAGQMHLLLKYLGDDVVLQFGGGTLGHPDGIQAGATANRVALEAIVLARNEGRDYVNEGPQILKEAARTCGPLQTSLDLWKDISFNFTSTDTADFVETPTANV</sequence>
<dbReference type="EC" id="4.1.1.39" evidence="1"/>
<dbReference type="EMBL" id="Z21723">
    <property type="protein sequence ID" value="CAA79821.1"/>
    <property type="molecule type" value="Genomic_DNA"/>
</dbReference>
<dbReference type="EMBL" id="AF022186">
    <property type="protein sequence ID" value="AAF12960.1"/>
    <property type="molecule type" value="Genomic_DNA"/>
</dbReference>
<dbReference type="PIR" id="S31916">
    <property type="entry name" value="S31916"/>
</dbReference>
<dbReference type="RefSeq" id="NP_045134.1">
    <property type="nucleotide sequence ID" value="NC_001840.1"/>
</dbReference>
<dbReference type="SMR" id="P37393"/>
<dbReference type="GeneID" id="800305"/>
<dbReference type="GO" id="GO:0009507">
    <property type="term" value="C:chloroplast"/>
    <property type="evidence" value="ECO:0007669"/>
    <property type="project" value="UniProtKB-SubCell"/>
</dbReference>
<dbReference type="GO" id="GO:0000287">
    <property type="term" value="F:magnesium ion binding"/>
    <property type="evidence" value="ECO:0007669"/>
    <property type="project" value="UniProtKB-UniRule"/>
</dbReference>
<dbReference type="GO" id="GO:0004497">
    <property type="term" value="F:monooxygenase activity"/>
    <property type="evidence" value="ECO:0007669"/>
    <property type="project" value="UniProtKB-KW"/>
</dbReference>
<dbReference type="GO" id="GO:0016984">
    <property type="term" value="F:ribulose-bisphosphate carboxylase activity"/>
    <property type="evidence" value="ECO:0007669"/>
    <property type="project" value="UniProtKB-UniRule"/>
</dbReference>
<dbReference type="GO" id="GO:0019253">
    <property type="term" value="P:reductive pentose-phosphate cycle"/>
    <property type="evidence" value="ECO:0007669"/>
    <property type="project" value="UniProtKB-UniRule"/>
</dbReference>
<dbReference type="CDD" id="cd08212">
    <property type="entry name" value="RuBisCO_large_I"/>
    <property type="match status" value="1"/>
</dbReference>
<dbReference type="Gene3D" id="3.20.20.110">
    <property type="entry name" value="Ribulose bisphosphate carboxylase, large subunit, C-terminal domain"/>
    <property type="match status" value="1"/>
</dbReference>
<dbReference type="Gene3D" id="3.30.70.150">
    <property type="entry name" value="RuBisCO large subunit, N-terminal domain"/>
    <property type="match status" value="1"/>
</dbReference>
<dbReference type="HAMAP" id="MF_01338">
    <property type="entry name" value="RuBisCO_L_type1"/>
    <property type="match status" value="1"/>
</dbReference>
<dbReference type="InterPro" id="IPR033966">
    <property type="entry name" value="RuBisCO"/>
</dbReference>
<dbReference type="InterPro" id="IPR020878">
    <property type="entry name" value="RuBisCo_large_chain_AS"/>
</dbReference>
<dbReference type="InterPro" id="IPR000685">
    <property type="entry name" value="RuBisCO_lsu_C"/>
</dbReference>
<dbReference type="InterPro" id="IPR036376">
    <property type="entry name" value="RuBisCO_lsu_C_sf"/>
</dbReference>
<dbReference type="InterPro" id="IPR017443">
    <property type="entry name" value="RuBisCO_lsu_fd_N"/>
</dbReference>
<dbReference type="InterPro" id="IPR036422">
    <property type="entry name" value="RuBisCO_lsu_N_sf"/>
</dbReference>
<dbReference type="InterPro" id="IPR020888">
    <property type="entry name" value="RuBisCO_lsuI"/>
</dbReference>
<dbReference type="NCBIfam" id="NF003252">
    <property type="entry name" value="PRK04208.1"/>
    <property type="match status" value="1"/>
</dbReference>
<dbReference type="PANTHER" id="PTHR42704">
    <property type="entry name" value="RIBULOSE BISPHOSPHATE CARBOXYLASE"/>
    <property type="match status" value="1"/>
</dbReference>
<dbReference type="PANTHER" id="PTHR42704:SF17">
    <property type="entry name" value="RIBULOSE BISPHOSPHATE CARBOXYLASE LARGE CHAIN"/>
    <property type="match status" value="1"/>
</dbReference>
<dbReference type="Pfam" id="PF00016">
    <property type="entry name" value="RuBisCO_large"/>
    <property type="match status" value="1"/>
</dbReference>
<dbReference type="Pfam" id="PF02788">
    <property type="entry name" value="RuBisCO_large_N"/>
    <property type="match status" value="1"/>
</dbReference>
<dbReference type="SFLD" id="SFLDG01052">
    <property type="entry name" value="RuBisCO"/>
    <property type="match status" value="1"/>
</dbReference>
<dbReference type="SFLD" id="SFLDS00014">
    <property type="entry name" value="RuBisCO"/>
    <property type="match status" value="1"/>
</dbReference>
<dbReference type="SFLD" id="SFLDG00301">
    <property type="entry name" value="RuBisCO-like_proteins"/>
    <property type="match status" value="1"/>
</dbReference>
<dbReference type="SUPFAM" id="SSF51649">
    <property type="entry name" value="RuBisCo, C-terminal domain"/>
    <property type="match status" value="1"/>
</dbReference>
<dbReference type="SUPFAM" id="SSF54966">
    <property type="entry name" value="RuBisCO, large subunit, small (N-terminal) domain"/>
    <property type="match status" value="1"/>
</dbReference>
<dbReference type="PROSITE" id="PS00157">
    <property type="entry name" value="RUBISCO_LARGE"/>
    <property type="match status" value="1"/>
</dbReference>
<gene>
    <name evidence="1" type="primary">rbcL</name>
</gene>
<organism>
    <name type="scientific">Cyanidium caldarium</name>
    <name type="common">Red alga</name>
    <dbReference type="NCBI Taxonomy" id="2771"/>
    <lineage>
        <taxon>Eukaryota</taxon>
        <taxon>Rhodophyta</taxon>
        <taxon>Bangiophyceae</taxon>
        <taxon>Cyanidiales</taxon>
        <taxon>Cyanidiaceae</taxon>
        <taxon>Cyanidium</taxon>
    </lineage>
</organism>
<accession>P37393</accession>
<accession>Q9TLY4</accession>
<proteinExistence type="inferred from homology"/>
<evidence type="ECO:0000255" key="1">
    <source>
        <dbReference type="HAMAP-Rule" id="MF_01338"/>
    </source>
</evidence>
<evidence type="ECO:0000305" key="2"/>
<name>RBL_CYACA</name>